<name>COLQ1_BACCQ</name>
<keyword id="KW-0106">Calcium</keyword>
<keyword id="KW-0378">Hydrolase</keyword>
<keyword id="KW-0479">Metal-binding</keyword>
<keyword id="KW-0482">Metalloprotease</keyword>
<keyword id="KW-0645">Protease</keyword>
<keyword id="KW-0964">Secreted</keyword>
<keyword id="KW-0732">Signal</keyword>
<keyword id="KW-0843">Virulence</keyword>
<keyword id="KW-0862">Zinc</keyword>
<keyword id="KW-0865">Zymogen</keyword>
<organism>
    <name type="scientific">Bacillus cereus (strain Q1)</name>
    <dbReference type="NCBI Taxonomy" id="361100"/>
    <lineage>
        <taxon>Bacteria</taxon>
        <taxon>Bacillati</taxon>
        <taxon>Bacillota</taxon>
        <taxon>Bacilli</taxon>
        <taxon>Bacillales</taxon>
        <taxon>Bacillaceae</taxon>
        <taxon>Bacillus</taxon>
        <taxon>Bacillus cereus group</taxon>
    </lineage>
</organism>
<feature type="signal peptide" evidence="2">
    <location>
        <begin position="1"/>
        <end position="30"/>
    </location>
</feature>
<feature type="propeptide" id="PRO_0000456571" evidence="9">
    <location>
        <begin position="31"/>
        <end position="93"/>
    </location>
</feature>
<feature type="chain" id="PRO_5002886686" description="Collagenase ColQ1" evidence="9">
    <location>
        <begin position="94"/>
        <end position="965"/>
    </location>
</feature>
<feature type="domain" description="PKD" evidence="3">
    <location>
        <begin position="769"/>
        <end position="850"/>
    </location>
</feature>
<feature type="region of interest" description="S1 metalloprotease domain" evidence="9">
    <location>
        <begin position="94"/>
        <end position="765"/>
    </location>
</feature>
<feature type="region of interest" description="Activator domain" evidence="9">
    <location>
        <begin position="94"/>
        <end position="366"/>
    </location>
</feature>
<feature type="region of interest" description="Catalytic subdomain" evidence="9">
    <location>
        <begin position="376"/>
        <end position="645"/>
    </location>
</feature>
<feature type="region of interest" description="Helper subdomain" evidence="9">
    <location>
        <begin position="653"/>
        <end position="765"/>
    </location>
</feature>
<feature type="region of interest" description="Disordered" evidence="4">
    <location>
        <begin position="842"/>
        <end position="867"/>
    </location>
</feature>
<feature type="region of interest" description="Collagen-binding domain" evidence="9">
    <location>
        <begin position="853"/>
        <end position="965"/>
    </location>
</feature>
<feature type="compositionally biased region" description="Polar residues" evidence="4">
    <location>
        <begin position="845"/>
        <end position="859"/>
    </location>
</feature>
<feature type="active site" evidence="1">
    <location>
        <position position="502"/>
    </location>
</feature>
<feature type="binding site" evidence="1">
    <location>
        <position position="501"/>
    </location>
    <ligand>
        <name>Zn(2+)</name>
        <dbReference type="ChEBI" id="CHEBI:29105"/>
        <note>catalytic</note>
    </ligand>
</feature>
<feature type="binding site" evidence="1">
    <location>
        <position position="505"/>
    </location>
    <ligand>
        <name>Zn(2+)</name>
        <dbReference type="ChEBI" id="CHEBI:29105"/>
        <note>catalytic</note>
    </ligand>
</feature>
<feature type="binding site" evidence="1">
    <location>
        <position position="533"/>
    </location>
    <ligand>
        <name>Zn(2+)</name>
        <dbReference type="ChEBI" id="CHEBI:29105"/>
        <note>catalytic</note>
    </ligand>
</feature>
<feature type="mutagenesis site" description="Loss of collagenase activity." evidence="5">
    <original>E</original>
    <variation>A</variation>
    <location>
        <position position="502"/>
    </location>
</feature>
<accession>B9J3S4</accession>
<dbReference type="EC" id="3.4.24.3" evidence="5"/>
<dbReference type="EMBL" id="CP000227">
    <property type="protein sequence ID" value="ACM11073.1"/>
    <property type="molecule type" value="Genomic_DNA"/>
</dbReference>
<dbReference type="SMR" id="B9J3S4"/>
<dbReference type="BindingDB" id="B9J3S4"/>
<dbReference type="ChEMBL" id="CHEMBL5169213"/>
<dbReference type="MEROPS" id="M09.005"/>
<dbReference type="KEGG" id="bcq:BCQ_0620"/>
<dbReference type="HOGENOM" id="CLU_012279_0_0_9"/>
<dbReference type="Proteomes" id="UP000000441">
    <property type="component" value="Chromosome"/>
</dbReference>
<dbReference type="GO" id="GO:0005576">
    <property type="term" value="C:extracellular region"/>
    <property type="evidence" value="ECO:0007669"/>
    <property type="project" value="UniProtKB-SubCell"/>
</dbReference>
<dbReference type="GO" id="GO:0004222">
    <property type="term" value="F:metalloendopeptidase activity"/>
    <property type="evidence" value="ECO:0007669"/>
    <property type="project" value="UniProtKB-EC"/>
</dbReference>
<dbReference type="GO" id="GO:0008270">
    <property type="term" value="F:zinc ion binding"/>
    <property type="evidence" value="ECO:0007669"/>
    <property type="project" value="InterPro"/>
</dbReference>
<dbReference type="GO" id="GO:0006508">
    <property type="term" value="P:proteolysis"/>
    <property type="evidence" value="ECO:0007669"/>
    <property type="project" value="UniProtKB-KW"/>
</dbReference>
<dbReference type="CDD" id="cd00146">
    <property type="entry name" value="PKD"/>
    <property type="match status" value="1"/>
</dbReference>
<dbReference type="FunFam" id="2.60.40.10:FF:000270">
    <property type="entry name" value="Cell surface protein"/>
    <property type="match status" value="1"/>
</dbReference>
<dbReference type="FunFam" id="1.10.390.20:FF:000001">
    <property type="entry name" value="Microbial collagenase"/>
    <property type="match status" value="1"/>
</dbReference>
<dbReference type="FunFam" id="2.60.120.380:FF:000012">
    <property type="entry name" value="Microbial collagenase"/>
    <property type="match status" value="1"/>
</dbReference>
<dbReference type="FunFam" id="3.30.980.50:FF:000001">
    <property type="entry name" value="Microbial collagenase"/>
    <property type="match status" value="1"/>
</dbReference>
<dbReference type="FunFam" id="3.40.30.160:FF:000001">
    <property type="entry name" value="Microbial collagenase"/>
    <property type="match status" value="1"/>
</dbReference>
<dbReference type="Gene3D" id="1.10.390.20">
    <property type="match status" value="1"/>
</dbReference>
<dbReference type="Gene3D" id="2.60.120.380">
    <property type="match status" value="1"/>
</dbReference>
<dbReference type="Gene3D" id="3.30.980.50">
    <property type="match status" value="1"/>
</dbReference>
<dbReference type="Gene3D" id="3.40.30.160">
    <property type="entry name" value="Collagenase ColT, N-terminal domain"/>
    <property type="match status" value="1"/>
</dbReference>
<dbReference type="Gene3D" id="2.60.40.10">
    <property type="entry name" value="Immunoglobulins"/>
    <property type="match status" value="1"/>
</dbReference>
<dbReference type="InterPro" id="IPR041379">
    <property type="entry name" value="ColG_subdomain"/>
</dbReference>
<dbReference type="InterPro" id="IPR013783">
    <property type="entry name" value="Ig-like_fold"/>
</dbReference>
<dbReference type="InterPro" id="IPR007280">
    <property type="entry name" value="Peptidase_C_arc/bac"/>
</dbReference>
<dbReference type="InterPro" id="IPR013661">
    <property type="entry name" value="Peptidase_M9_N_dom"/>
</dbReference>
<dbReference type="InterPro" id="IPR002169">
    <property type="entry name" value="Peptidase_M9A/M9B"/>
</dbReference>
<dbReference type="InterPro" id="IPR022409">
    <property type="entry name" value="PKD/Chitinase_dom"/>
</dbReference>
<dbReference type="InterPro" id="IPR000601">
    <property type="entry name" value="PKD_dom"/>
</dbReference>
<dbReference type="InterPro" id="IPR035986">
    <property type="entry name" value="PKD_dom_sf"/>
</dbReference>
<dbReference type="PANTHER" id="PTHR13062">
    <property type="entry name" value="COLLAGENASE"/>
    <property type="match status" value="1"/>
</dbReference>
<dbReference type="PANTHER" id="PTHR13062:SF9">
    <property type="entry name" value="MICROBIAL COLLAGENASE"/>
    <property type="match status" value="1"/>
</dbReference>
<dbReference type="Pfam" id="PF18496">
    <property type="entry name" value="ColG_sub"/>
    <property type="match status" value="1"/>
</dbReference>
<dbReference type="Pfam" id="PF01752">
    <property type="entry name" value="Peptidase_M9"/>
    <property type="match status" value="1"/>
</dbReference>
<dbReference type="Pfam" id="PF08453">
    <property type="entry name" value="Peptidase_M9_N"/>
    <property type="match status" value="1"/>
</dbReference>
<dbReference type="Pfam" id="PF18911">
    <property type="entry name" value="PKD_4"/>
    <property type="match status" value="1"/>
</dbReference>
<dbReference type="Pfam" id="PF04151">
    <property type="entry name" value="PPC"/>
    <property type="match status" value="1"/>
</dbReference>
<dbReference type="PRINTS" id="PR00931">
    <property type="entry name" value="MICOLLPTASE"/>
</dbReference>
<dbReference type="SMART" id="SM00089">
    <property type="entry name" value="PKD"/>
    <property type="match status" value="1"/>
</dbReference>
<dbReference type="SUPFAM" id="SSF89260">
    <property type="entry name" value="Collagen-binding domain"/>
    <property type="match status" value="1"/>
</dbReference>
<dbReference type="SUPFAM" id="SSF49299">
    <property type="entry name" value="PKD domain"/>
    <property type="match status" value="1"/>
</dbReference>
<dbReference type="PROSITE" id="PS50093">
    <property type="entry name" value="PKD"/>
    <property type="match status" value="1"/>
</dbReference>
<dbReference type="PROSITE" id="PS00142">
    <property type="entry name" value="ZINC_PROTEASE"/>
    <property type="match status" value="1"/>
</dbReference>
<sequence length="965" mass="109958">MNKKSKINKVMLSISTMALSLGALQAPASAEEKVPYNVLKTKPVGIEKPVDEIGHVSKAEETLSFQERLKVGDFSQRPASIPNKAAVKQVKESYSMADLNKMNDQELVETLGCIKWHQITDLFQFNEDAKAFYKDKGKMQVIIDELAHRGSTFTRDDSKGIQTFTEVLRSAFYLAFYNNELSELNERSFQDKCLPALKAIAKNPNFKLGTAEQDTVVSAYGKLISNASSDVETVQYASNILKQYNDNFNTYVNDRMKGQAIYDIMQGIDYDIQSYLIEARKEANETMWYGKVDGFINEINRIALLNEVTPENKWLVNNGIYFASRLGKFHSNPNKGLEVVTQAMHMYPRLSEPYFVAVEQITTNYNGKDYSGNTVDLEKIRKEGKEQYLPKTYTFDDGSIVFKTGDKVSEEKIKRLYWAAKEVKAQYHRVIGNDKALEPGNADDILTIVIYNSPEEYQLNRQLYGYETNNGGIYIEETGTFFTYERTPEQSIYSLEELFRHEFTHYLQGRYEVPGLFGRGDMYQNERLTWFQEGNAEFFAGSTRTNNVVPRKSIISGLSSDPASRYTAERTLFAKYGSWDFYNYSFALQSYLYTHQFETFDKIQDLIRANDVKNYDAYRENLSKDPKLNKEYQEYMQQLIDNQDKYNVPAVADDYLAEHAPKSLTAVEKEMTETLPMKDAKMTKHSSQFFNTFTLEGTYTGSVTKGESEDWNAMSKKVNEVLEQLAQKEWSGYKTVTAYFVNYRVNSSNEFEYDVVFHGIAKDDGENKAPTVNINGPYNGLVKEGIQFKSDGSKDEDGKIVSYLWDFGDGRTSTEVNPVHVYEREGSYKVALIVKDDKGKESKSETTVTVKDGSLTESEPNNRPEEANRIGLNTTIKGSLIGGDHTDVYTFNVASAKDIDISVLNEYGIGMTWVLHHESDMQNYAAYGQANGNHIEANFNAKPGEYYLYVYKYDNGDGTYKLSVK</sequence>
<comment type="function">
    <text evidence="5 6">Acts as a true collagenase, which is highly active and cleaves natively folded collagen (PubMed:33603127). In vitro, can also cleave gelatin and the synthetic peptide FALGPA (furylacryloyl-Leu-Gly-Pro-Ala) (PubMed:33603127). Causes damage on dermal collagen (COL), resulting in gaps in the tissue, which might lead to an accelerated bacterial infiltration and penetration into deeper sites of the host (PubMed:35310821).</text>
</comment>
<comment type="catalytic activity">
    <reaction evidence="5">
        <text>Digestion of native collagen in the triple helical region at Xaa-|-Gly bonds. With synthetic peptides, a preference is shown for Gly at P3 and P1', Pro and Ala at P2 and P2', and hydroxyproline, Ala or Arg at P3'.</text>
        <dbReference type="EC" id="3.4.24.3"/>
    </reaction>
</comment>
<comment type="cofactor">
    <cofactor evidence="1">
        <name>Ca(2+)</name>
        <dbReference type="ChEBI" id="CHEBI:29108"/>
    </cofactor>
</comment>
<comment type="cofactor">
    <cofactor evidence="1">
        <name>Zn(2+)</name>
        <dbReference type="ChEBI" id="CHEBI:29105"/>
    </cofactor>
</comment>
<comment type="activity regulation">
    <text evidence="5">Strongly inhibited by EDTA (PubMed:33603127). Not inhibited by E-64 and PMSF, broad-spectrum cysteine and serine protease inhibitors (PubMed:33603127).</text>
</comment>
<comment type="biophysicochemical properties">
    <kinetics>
        <KM evidence="5">1.36 uM for gelatin</KM>
        <KM evidence="5">1.72 uM for native collagen from rat tail</KM>
        <text evidence="5">kcat is 7.7 sec(-1) with gelatin as substrate (PubMed:33603127). kcat is 2.1 sec(-1) with native collagen from rat tail as substrate (PubMed:33603127).</text>
    </kinetics>
</comment>
<comment type="subcellular location">
    <subcellularLocation>
        <location evidence="5">Secreted</location>
    </subcellularLocation>
</comment>
<comment type="miscellaneous">
    <text evidence="6 10">Was identified as a promising drug target (PubMed:35310821). Collagenase inhibitors might serve as promising therapeutic agents in the future not only to stop bacterial dissemination but also to accelerate the immune response and subsequently accelerate the wound healing process (Probable).</text>
</comment>
<comment type="similarity">
    <text evidence="8">Belongs to the peptidase M9B family. Collagenase subfamily.</text>
</comment>
<reference key="1">
    <citation type="journal article" date="2009" name="J. Bacteriol.">
        <title>Complete genome sequence of the extremophilic Bacillus cereus strain Q1 with industrial applications.</title>
        <authorList>
            <person name="Xiong Z."/>
            <person name="Jiang Y."/>
            <person name="Qi D."/>
            <person name="Lu H."/>
            <person name="Yang F."/>
            <person name="Yang J."/>
            <person name="Chen L."/>
            <person name="Sun L."/>
            <person name="Xu X."/>
            <person name="Xue Y."/>
            <person name="Zhu Y."/>
            <person name="Jin Q."/>
        </authorList>
    </citation>
    <scope>NUCLEOTIDE SEQUENCE [LARGE SCALE GENOMIC DNA]</scope>
    <source>
        <strain>Q1</strain>
    </source>
</reference>
<reference key="2">
    <citation type="journal article" date="2021" name="Sci. Rep.">
        <title>Biochemical characterisation of a collagenase from Bacillus cereus strain Q1.</title>
        <authorList>
            <person name="Hoppe I.J."/>
            <person name="Brandstetter H."/>
            <person name="Schoenauer E."/>
        </authorList>
    </citation>
    <scope>FUNCTION</scope>
    <scope>CATALYTIC ACTIVITY</scope>
    <scope>ACTIVITY REGULATION</scope>
    <scope>BIOPHYSICOCHEMICAL PROPERTIES</scope>
    <scope>SUBCELLULAR LOCATION</scope>
    <scope>MUTAGENESIS OF GLU-502</scope>
    <source>
        <strain>Q1</strain>
    </source>
</reference>
<reference key="3">
    <citation type="journal article" date="2022" name="Adv. Ther.">
        <title>Inhibition of collagenase Q1 of Bacillus cereus as a novel antivirulence strategy for the treatment of skin-wound infections.</title>
        <authorList>
            <person name="Alhayek A."/>
            <person name="Khan E.S."/>
            <person name="Schoenauer E."/>
            <person name="Daeinghaus T."/>
            <person name="Shafiei R."/>
            <person name="Voos K."/>
            <person name="Han M.K.L."/>
            <person name="Ducho C."/>
            <person name="Posselt G."/>
            <person name="Wessler S."/>
            <person name="Brandstetter H."/>
            <person name="Haupenthal J."/>
            <person name="Del Campo A."/>
            <person name="Hirsch A.K.H."/>
        </authorList>
    </citation>
    <scope>FUNCTION IN VIRULENCE</scope>
    <scope>IDENTIFICATION AS A DRUG TARGET</scope>
</reference>
<evidence type="ECO:0000250" key="1">
    <source>
        <dbReference type="UniProtKB" id="Q9X721"/>
    </source>
</evidence>
<evidence type="ECO:0000255" key="2"/>
<evidence type="ECO:0000255" key="3">
    <source>
        <dbReference type="PROSITE-ProRule" id="PRU00151"/>
    </source>
</evidence>
<evidence type="ECO:0000256" key="4">
    <source>
        <dbReference type="SAM" id="MobiDB-lite"/>
    </source>
</evidence>
<evidence type="ECO:0000269" key="5">
    <source>
    </source>
</evidence>
<evidence type="ECO:0000269" key="6">
    <source>
    </source>
</evidence>
<evidence type="ECO:0000303" key="7">
    <source>
    </source>
</evidence>
<evidence type="ECO:0000305" key="8"/>
<evidence type="ECO:0000305" key="9">
    <source>
    </source>
</evidence>
<evidence type="ECO:0000305" key="10">
    <source>
    </source>
</evidence>
<evidence type="ECO:0000312" key="11">
    <source>
        <dbReference type="EMBL" id="ACM11073.1"/>
    </source>
</evidence>
<gene>
    <name evidence="7" type="primary">colQ1</name>
    <name evidence="11" type="synonym">colA</name>
    <name evidence="11" type="ordered locus">BCQ_0620</name>
</gene>
<protein>
    <recommendedName>
        <fullName evidence="8">Collagenase ColQ1</fullName>
        <ecNumber evidence="5">3.4.24.3</ecNumber>
    </recommendedName>
    <alternativeName>
        <fullName evidence="8">Microbial collagenase</fullName>
    </alternativeName>
</protein>
<proteinExistence type="evidence at protein level"/>